<accession>Q70LM5</accession>
<feature type="chain" id="PRO_0000193091" description="Linear gramicidin synthase subunit C">
    <location>
        <begin position="1"/>
        <end position="7756"/>
    </location>
</feature>
<feature type="domain" description="Carrier 1" evidence="1">
    <location>
        <begin position="977"/>
        <end position="1052"/>
    </location>
</feature>
<feature type="domain" description="Carrier 2" evidence="1">
    <location>
        <begin position="2042"/>
        <end position="2116"/>
    </location>
</feature>
<feature type="domain" description="Carrier 3" evidence="1">
    <location>
        <begin position="3557"/>
        <end position="3632"/>
    </location>
</feature>
<feature type="domain" description="Carrier 4" evidence="1">
    <location>
        <begin position="4621"/>
        <end position="4695"/>
    </location>
</feature>
<feature type="domain" description="Carrier 5" evidence="1">
    <location>
        <begin position="6141"/>
        <end position="6216"/>
    </location>
</feature>
<feature type="domain" description="Carrier 6" evidence="1">
    <location>
        <begin position="7200"/>
        <end position="7274"/>
    </location>
</feature>
<feature type="modified residue" description="O-(pantetheine 4'-phosphoryl)serine" evidence="1">
    <location>
        <position position="1012"/>
    </location>
</feature>
<feature type="modified residue" description="O-(pantetheine 4'-phosphoryl)serine" evidence="1">
    <location>
        <position position="2077"/>
    </location>
</feature>
<feature type="modified residue" description="O-(pantetheine 4'-phosphoryl)serine" evidence="1">
    <location>
        <position position="3592"/>
    </location>
</feature>
<feature type="modified residue" description="O-(pantetheine 4'-phosphoryl)serine" evidence="1">
    <location>
        <position position="4656"/>
    </location>
</feature>
<feature type="modified residue" description="O-(pantetheine 4'-phosphoryl)serine" evidence="1">
    <location>
        <position position="6176"/>
    </location>
</feature>
<feature type="modified residue" description="O-(pantetheine 4'-phosphoryl)serine" evidence="1">
    <location>
        <position position="7235"/>
    </location>
</feature>
<evidence type="ECO:0000255" key="1">
    <source>
        <dbReference type="PROSITE-ProRule" id="PRU00258"/>
    </source>
</evidence>
<evidence type="ECO:0000305" key="2"/>
<proteinExistence type="inferred from homology"/>
<dbReference type="EC" id="5.1.1.-"/>
<dbReference type="EMBL" id="AJ566197">
    <property type="protein sequence ID" value="CAD92851.1"/>
    <property type="molecule type" value="Genomic_DNA"/>
</dbReference>
<dbReference type="SMR" id="Q70LM5"/>
<dbReference type="STRING" id="54914.AV540_01955"/>
<dbReference type="GO" id="GO:0005829">
    <property type="term" value="C:cytosol"/>
    <property type="evidence" value="ECO:0007669"/>
    <property type="project" value="TreeGrafter"/>
</dbReference>
<dbReference type="GO" id="GO:0016853">
    <property type="term" value="F:isomerase activity"/>
    <property type="evidence" value="ECO:0007669"/>
    <property type="project" value="UniProtKB-KW"/>
</dbReference>
<dbReference type="GO" id="GO:0016874">
    <property type="term" value="F:ligase activity"/>
    <property type="evidence" value="ECO:0007669"/>
    <property type="project" value="UniProtKB-KW"/>
</dbReference>
<dbReference type="GO" id="GO:0031177">
    <property type="term" value="F:phosphopantetheine binding"/>
    <property type="evidence" value="ECO:0007669"/>
    <property type="project" value="InterPro"/>
</dbReference>
<dbReference type="GO" id="GO:0043041">
    <property type="term" value="P:amino acid activation for nonribosomal peptide biosynthetic process"/>
    <property type="evidence" value="ECO:0007669"/>
    <property type="project" value="TreeGrafter"/>
</dbReference>
<dbReference type="GO" id="GO:0017000">
    <property type="term" value="P:antibiotic biosynthetic process"/>
    <property type="evidence" value="ECO:0007669"/>
    <property type="project" value="UniProtKB-KW"/>
</dbReference>
<dbReference type="GO" id="GO:0008610">
    <property type="term" value="P:lipid biosynthetic process"/>
    <property type="evidence" value="ECO:0007669"/>
    <property type="project" value="UniProtKB-ARBA"/>
</dbReference>
<dbReference type="GO" id="GO:0044550">
    <property type="term" value="P:secondary metabolite biosynthetic process"/>
    <property type="evidence" value="ECO:0007669"/>
    <property type="project" value="TreeGrafter"/>
</dbReference>
<dbReference type="CDD" id="cd17652">
    <property type="entry name" value="A_NRPS_CmdD_like"/>
    <property type="match status" value="2"/>
</dbReference>
<dbReference type="CDD" id="cd12117">
    <property type="entry name" value="A_NRPS_Srf_like"/>
    <property type="match status" value="2"/>
</dbReference>
<dbReference type="CDD" id="cd17651">
    <property type="entry name" value="A_NRPS_VisG_like"/>
    <property type="match status" value="2"/>
</dbReference>
<dbReference type="CDD" id="cd19543">
    <property type="entry name" value="DCL_NRPS"/>
    <property type="match status" value="3"/>
</dbReference>
<dbReference type="CDD" id="cd19534">
    <property type="entry name" value="E_NRPS"/>
    <property type="match status" value="3"/>
</dbReference>
<dbReference type="CDD" id="cd19531">
    <property type="entry name" value="LCL_NRPS-like"/>
    <property type="match status" value="3"/>
</dbReference>
<dbReference type="FunFam" id="3.30.300.30:FF:000010">
    <property type="entry name" value="Enterobactin synthetase component F"/>
    <property type="match status" value="6"/>
</dbReference>
<dbReference type="FunFam" id="1.10.1200.10:FF:000016">
    <property type="entry name" value="Non-ribosomal peptide synthase"/>
    <property type="match status" value="1"/>
</dbReference>
<dbReference type="FunFam" id="3.30.559.10:FF:000012">
    <property type="entry name" value="Non-ribosomal peptide synthetase"/>
    <property type="match status" value="3"/>
</dbReference>
<dbReference type="FunFam" id="3.30.559.30:FF:000001">
    <property type="entry name" value="Non-ribosomal peptide synthetase"/>
    <property type="match status" value="1"/>
</dbReference>
<dbReference type="FunFam" id="3.40.50.12780:FF:000012">
    <property type="entry name" value="Non-ribosomal peptide synthetase"/>
    <property type="match status" value="6"/>
</dbReference>
<dbReference type="FunFam" id="3.40.50.980:FF:000001">
    <property type="entry name" value="Non-ribosomal peptide synthetase"/>
    <property type="match status" value="6"/>
</dbReference>
<dbReference type="FunFam" id="2.30.38.10:FF:000001">
    <property type="entry name" value="Non-ribosomal peptide synthetase PvdI"/>
    <property type="match status" value="6"/>
</dbReference>
<dbReference type="FunFam" id="1.10.1200.10:FF:000005">
    <property type="entry name" value="Nonribosomal peptide synthetase 1"/>
    <property type="match status" value="5"/>
</dbReference>
<dbReference type="Gene3D" id="3.30.300.30">
    <property type="match status" value="6"/>
</dbReference>
<dbReference type="Gene3D" id="3.40.50.980">
    <property type="match status" value="12"/>
</dbReference>
<dbReference type="Gene3D" id="1.10.1200.10">
    <property type="entry name" value="ACP-like"/>
    <property type="match status" value="6"/>
</dbReference>
<dbReference type="Gene3D" id="3.30.559.10">
    <property type="entry name" value="Chloramphenicol acetyltransferase-like domain"/>
    <property type="match status" value="9"/>
</dbReference>
<dbReference type="Gene3D" id="2.30.38.10">
    <property type="entry name" value="Luciferase, Domain 3"/>
    <property type="match status" value="6"/>
</dbReference>
<dbReference type="Gene3D" id="3.30.559.30">
    <property type="entry name" value="Nonribosomal peptide synthetase, condensation domain"/>
    <property type="match status" value="9"/>
</dbReference>
<dbReference type="InterPro" id="IPR010071">
    <property type="entry name" value="AA_adenyl_dom"/>
</dbReference>
<dbReference type="InterPro" id="IPR036736">
    <property type="entry name" value="ACP-like_sf"/>
</dbReference>
<dbReference type="InterPro" id="IPR025110">
    <property type="entry name" value="AMP-bd_C"/>
</dbReference>
<dbReference type="InterPro" id="IPR045851">
    <property type="entry name" value="AMP-bd_C_sf"/>
</dbReference>
<dbReference type="InterPro" id="IPR020845">
    <property type="entry name" value="AMP-binding_CS"/>
</dbReference>
<dbReference type="InterPro" id="IPR000873">
    <property type="entry name" value="AMP-dep_synth/lig_dom"/>
</dbReference>
<dbReference type="InterPro" id="IPR023213">
    <property type="entry name" value="CAT-like_dom_sf"/>
</dbReference>
<dbReference type="InterPro" id="IPR001242">
    <property type="entry name" value="Condensatn"/>
</dbReference>
<dbReference type="InterPro" id="IPR010060">
    <property type="entry name" value="NRPS_synth"/>
</dbReference>
<dbReference type="InterPro" id="IPR020806">
    <property type="entry name" value="PKS_PP-bd"/>
</dbReference>
<dbReference type="InterPro" id="IPR009081">
    <property type="entry name" value="PP-bd_ACP"/>
</dbReference>
<dbReference type="InterPro" id="IPR006162">
    <property type="entry name" value="Ppantetheine_attach_site"/>
</dbReference>
<dbReference type="NCBIfam" id="TIGR01733">
    <property type="entry name" value="AA-adenyl-dom"/>
    <property type="match status" value="6"/>
</dbReference>
<dbReference type="NCBIfam" id="TIGR01720">
    <property type="entry name" value="NRPS-para261"/>
    <property type="match status" value="3"/>
</dbReference>
<dbReference type="NCBIfam" id="NF003417">
    <property type="entry name" value="PRK04813.1"/>
    <property type="match status" value="6"/>
</dbReference>
<dbReference type="NCBIfam" id="NF004282">
    <property type="entry name" value="PRK05691.1"/>
    <property type="match status" value="8"/>
</dbReference>
<dbReference type="PANTHER" id="PTHR45527">
    <property type="entry name" value="NONRIBOSOMAL PEPTIDE SYNTHETASE"/>
    <property type="match status" value="1"/>
</dbReference>
<dbReference type="PANTHER" id="PTHR45527:SF14">
    <property type="entry name" value="PLIPASTATIN SYNTHASE SUBUNIT B"/>
    <property type="match status" value="1"/>
</dbReference>
<dbReference type="Pfam" id="PF00501">
    <property type="entry name" value="AMP-binding"/>
    <property type="match status" value="6"/>
</dbReference>
<dbReference type="Pfam" id="PF13193">
    <property type="entry name" value="AMP-binding_C"/>
    <property type="match status" value="6"/>
</dbReference>
<dbReference type="Pfam" id="PF00668">
    <property type="entry name" value="Condensation"/>
    <property type="match status" value="9"/>
</dbReference>
<dbReference type="Pfam" id="PF00550">
    <property type="entry name" value="PP-binding"/>
    <property type="match status" value="6"/>
</dbReference>
<dbReference type="SMART" id="SM00823">
    <property type="entry name" value="PKS_PP"/>
    <property type="match status" value="6"/>
</dbReference>
<dbReference type="SUPFAM" id="SSF56801">
    <property type="entry name" value="Acetyl-CoA synthetase-like"/>
    <property type="match status" value="6"/>
</dbReference>
<dbReference type="SUPFAM" id="SSF47336">
    <property type="entry name" value="ACP-like"/>
    <property type="match status" value="6"/>
</dbReference>
<dbReference type="SUPFAM" id="SSF52777">
    <property type="entry name" value="CoA-dependent acyltransferases"/>
    <property type="match status" value="18"/>
</dbReference>
<dbReference type="PROSITE" id="PS00455">
    <property type="entry name" value="AMP_BINDING"/>
    <property type="match status" value="6"/>
</dbReference>
<dbReference type="PROSITE" id="PS50075">
    <property type="entry name" value="CARRIER"/>
    <property type="match status" value="6"/>
</dbReference>
<dbReference type="PROSITE" id="PS00012">
    <property type="entry name" value="PHOSPHOPANTETHEINE"/>
    <property type="match status" value="5"/>
</dbReference>
<comment type="function">
    <text>Activates the 7th to 12th amino acids (Val, D-Val, Trp, D-Leu, Xaa and D-Leu) in linear gramicidin and catalyzes the formation of the peptide bond between them. This enzyme is also responsible for the epimerization of the 8th (D-Val), the 10th (D-Leu) and 12th (D-Leu) amino acids. The 11th (Xaa) amino acid is Trp in linear gramicidin A; Phe in linear gramicidin B and Tyr in linear gramicidin C.</text>
</comment>
<comment type="cofactor">
    <cofactor evidence="2">
        <name>pantetheine 4'-phosphate</name>
        <dbReference type="ChEBI" id="CHEBI:47942"/>
    </cofactor>
    <text evidence="2">Binds 6 phosphopantetheines covalently.</text>
</comment>
<comment type="subunit">
    <text>Large multienzyme complex composed of 4 subunits; LgrA, LgrB, LgrC and LgrD.</text>
</comment>
<comment type="domain">
    <text>Six module-bearing peptide synthase with a C-terminal epimerization domain. Each module incorporates one amino acid into the peptide product and can be further subdivided into domains responsible for substrate adenylation, thiolation, condensation (not for the initiation module), and epimerization (optional).</text>
</comment>
<comment type="miscellaneous">
    <text>Linear gramicidin is a pentadecapeptide antibiotic produced during sporulation.</text>
</comment>
<comment type="similarity">
    <text evidence="2">Belongs to the ATP-dependent AMP-binding enzyme family.</text>
</comment>
<sequence length="7756" mass="866321">MNSMGDLTDLYTLTPLQEGMLFHSLYSEGSAYMIQTTAILTGELDIVPFEKAWKKVIQRHSILRTGFIWEETEKPLQAVFESVPFSIRQKDWSSYGSDEQESMLAAFLQNEKAAGFDLSEAPLMRVTIIKLGEAVHRLIWSFHHLLLDGWSSPIVFQEVLDFYEAYRQGKDLRLPQARPFKDYVSWLRRQDKTASEQFWREFLGPMENPTPIPFETHAKRTAGHEGLEKQIGEATRALTGQVTKALAKLARTNKVTVNTIVQGAWAILLSRLSGEENVVYGVTGSGRPSDLPGVEQMVGMFINTLPMKAKIEPEQSLADWFKALQEQQSKVRQYEYTSLVDIQGWTDVPRGTPLFESIFVFENYPLGEEDEKEVGFTISAVQHFQEVDNPLTVVGIPGDPFSIKMMYATDRFEQAAIERTLDQLALILEAIVDNPERSLSALSLLRPEERQHLLVGLNDTATNYPSDKTVHQLFAETAARHPERIAAVAGDQQLTYAELEARANQLANYLQKQGVEAGTLVGLCVDRSLDMLIGLLAILKAGGAYVPIDPAYPEERLAFMLADAKISILLTQKHLGKQWKGRKRRTVYLDRDAKKWAEESPLAPDVDTTKDSLAYVIYTSGSTGTPKGVLAVHRGVVRLGQKTRTTSPISEADVFLQASTVSFDAATFEIWGALLNGAKLVLMPPDLPSLDELGEAIVQHKVTTLWLTAGLFSIMVDHNADYLRGVRQLLVGGDVVSVPHVRKVLALGGVTVINGYGPTENTTFTCCYPVTELSEDITSFPIGRPISNTTVYVLDKHKQPVPYGAAGELYIGGDGLALGYLNNAELTAERFVENPFDPQKGSRLYRTGDLVRYLPNGTIEFIGRIDNQVKIRGFRIELGEVEAALALHPEVSETVVMARENDRGEKHLTAYVTVAKDDAPEVADLQAWLKTKLPEYMVPSAYVFLDAMPLTANGKIDRRRLPEPEWGNRSETKAYTEPRNQAEELIASIWSQVLGVEKVGIHDNFFELGGHSLLATRVISRLREVFGVEQSVRSIFEHPTIDAWSEQTAALQLGGPGTDDSSTQIQPVPRDGALPLSFAQQRLWFFDQLMPDNPMYNIPFALRLQGELDVAAWEKSLQAIIARHESLRTTFTDIDGQAVQVIHPQLDWKLDTVDLRDRSSEEKQQASARLAADDAARPFDLRQGPLMRATMIRTEEQAHVFLINMHHIVSDGWSVGVFLRELFAHYEAYSKGEVPQLAPMPIQYADFAAWQREWLEGEVLEQQVAYWKEKLGGAEPLLALPTDRPRPALQSYEGATYTTSFSHDLLAKLKKLSKEAQHDLVHDIARRFPNVLYRYSGQEDIVVGSPVAGRNRQETEKLIGFFVNTLALRTSLSGDLPFTELLARVRETALAAYAHQDVPFEKLVDELQLERSLSYSQLFQVMFVLQNFPLEDVETAGLHVAPVDTESHLTTSKFDLTLTMREKEDTLVAAFEYSTDLFDRTTIERMAEHLQHLLASIVTQPEASLDQLALLGESEWNRLVVEQNETATDYPRDKTAHQLFAETAARYPERIAAVAGDQQLTYAELDTKANQLANYLQKQGVEAGTLVGLCVDRSLDMLVGLLAILKAGGAYVPLDPAYPEERLAFMLADANVSILLTQKHLGKQWKGRKRRTVYLDRDAKKWTAESPLAPAVDATKDSLAYVIYTSGSTGTPKGVLVAHRGIVRLVKNTNYVTITEEDVFLQASTVSFDAATFEIWGALLNGAKLVLMPPDLPSLDELGEAIVQHKVTTLWLTAGLFSIMVDHNADYLRGVRQLLVGGDVVSVPHVRKVLALDGVTVINGYGPTENTTFTCCYPVTELAEEITSFPIGRPISNTTVYVLDKNRQPVPLGVAGELYIGGDGLASGYLNNPELTAERFVDNPFDPQKASRLYRTGDLVRYLPDGAIEFIGRIDNQVKIRGFRIELGEIETALLRHPAVQEAFLMVREDAPGDKRLAAYLVFAGGQTVEPVEMRSYLKDKLPEYMIPSAFVQMDSFPLTPNGKVDRRALPTPEYARSEAASGYVAPATELEVKLADIWKTVLGVADVGIHDNFFELGGDSILSIQIVARANQLGIRLTPKQLFENQTIAELLRVVADSSQLPHTKWENEQGIVTGNVPLTPIQKWFFAADQPSLHHWNQSLLLTVQQPVDVSVLERAIASLLSHHDALRMSFSFVDGAWTQQMNGLGDHTPFRCVDLSDLSTQEQEQAARLEEIASEVQASLNIAEGNVVQAVYFNLGEQKAGRLLLVVHHLVVDGVSWRILLEDLQHAYEQLANHADVSFPAKTTSFKMWAEKLADYADSDALEQEKAYWLQQSSGGSPLPVDHPYEPNENTEAAAKQVTLSLRADETRALLHETLTAYRLQINDVLLAALAKAMQRWTGQKTLHVHLEGHGREEIIEGADLSRTVGWFTSMYPVQLDFDQSKPWGHVLKAVKEQLRHIPQKGIGYGILQYLSNDDEWKEQLQAYTKPEISFNYLGQFDQVVSAGAKFAMAEESRGANIAADAIRAHLIDVNSAISGEQLHITWMYNANIHNQETIEALARDYMESLREIMEHCRSEEAGGYTPSDFPLARLDQRAIDNYVGRDRSIENVYPLTPLQEGMLFHSLYEHAGGDYVVQFSMTMHHVEVDVFQQAWQKVVDRHSILRTSFIWDGVSTPHQIVRKHVQVVVDEQDWRHVPADQQKAEWDAFLEEDRKRSFAITEPPLMRWTLLRISDTAYRFIWSFHHVLLDGWSVPLVMKDWFAAYMALADGKDIQFGAVHPFSQYVAWIQRQDLQAAERFWRNHLKGIYAPTQVNFGQTVQPVGETKSYDERSIRFSAERTRELQAFARQHQVTLNTLVQSAWAMILGTYSKEADVVFGATGSGRPADLPGVENMVGLFINTLPIRVTLDPGKKVREWLRELQELQVELRQYEYTPLVDIHGWSEMARNAPLFESIFIFENYPIDESVKEVDHSFQIADVDSVEQTNYPLTVVCGPGAEFLVKIKFDQSRFDGGRIERVLEQMTLLLQSMTANPDQLLADVNMISQSEQKQVLIEWNETKVDYPTGLCVQQAFEQQVEKTPDAVALIYKDVELTYADLNQRANQLAHRLLAQEVKPDTLVGICVERSPEMIIGIFGVMKAGAAYVPIDPALPQERIAYMVEDSQASILLTQQSLAELLPKTQARVICLDGDSLANEPVANPASEVTEQNLAYVMYTSGSTGLPKGVMVEHHSVVNLAHALIEAFRIQPSSRVLQFTSFSFDVSVSEIVMALLAGAALVIEDREVLLPGPELISVLQQKRITTVSMVSSVLAALPAADLPDLQTLIVGGEAPSRELVARYADRRQFFNCYGPTEATVCSTMMLCNAGMKSAPIGRPLANATLYVLDANQKPVPVGVPGELYIGGKGLARGYWNRPELTAERFIAHPFGAKGERLYRTGDLVRYLPDGNLEFLGRIDTQVKIRGYRIELGEIESALSQHPAIQEAVVIAWEQRLAAYMVAAGEAQPAAEELARYLKETLPDYMIPAGFVFMDAIPLTVNGKVDRRALPAPDWGILATRQEYVAPRTPTEEMVANIWAQLLSVEKIGVHDDFFERGGHSLLATQAISRLRQAFGVELPLRMLFDHPTTAAISTQIASLLQGETALRSQPIVPVPRDQHVPLSFAQQRLWFLDRLIPNSFLYNIPSAARLHGELDVEAWERSLKLLIQRHESLRTTFSDRDGEAVQIIHPAIEWSLGRVDLREWAEAEREAKALQLAIEDAKRPFDLERGPLLRASLLVMAQQEYVFLLNLHHIVADGWSMNVFMEELVTIYEALSAGETPQLAELPLQYADYAAWQRDWLQGDVLEQQLAYWKAKVGGAEPLLALPTDRPRPAVQSHKGAMHTITLPAERLAALKTLSREEGSTLFMTLLAAFQTLLYRYSGQSDIVVGSPVAGRNRQETESLIGFFINTLAMRTDLSGEPTFRDLLGKVRETALEAYAHQDLPFEKLVDELELERSLSYSPLFQVMFVLQNIPMDAQALSHIRLEPFHIGQEGVSAKFDITLTTVELPAGLMATFEYNTDLFDPATIERMAGHYANLLAAVSVNPLQPITAIPLVSDQERKQVLFQWNDTSVPSERDTCVHEQVARIAQQLPNQLAVVSDEGQITYAELDAKANQVANYLHKQGIISETLVGVCLDRSIDMLVAQLGILKAGGAYVPMDPAYPQERLAFMMQDAEMPVVLTQEHLLAQLPEARATFLCLDRDWSLIAEESDVAPVIATNRDNLAYVIYTSGSTGTPKGVEIEHAALLNLVSWHQRAYEVGAEDRATQIAGTAFDASVWEIWPYLTKGATLYLPSEEIRLVPEQLRDWLVASGITISFLPTPLAERLLTLEWPSDAKLRYMLTGGDKLHDYPPATLPFVLANQYGPTENAVVATAGIVPAAAGQVSAPSIGRPIDNVQVYVLDEKLQPVPIGVAGELYIAGDSLARGYLHRPDLTRERFIANPYGQKAGARMYKTGDLVRYLPDGNIEFIGRADDQVSIRGFRVELGEIETALYSHPAVKETIVLVREDMPGMKRLVAYIVQREGQEGQAVQAGDFRSYLKELLPEYMVPAAFVFMADLPLTPNGKVDRRALPAPDLFNSEADGTYVAPATELEIKLAHIWKNVLGLADVGIHDNFFELGGDSILSIQIVSRANQAGIRLTPKQLLANQTIAELASVATVTDESEATKLPNEQGIVTGDVPLTPIQTWFFASEQPSVHHWNQSLLLTVQQPVDLAVLERTIECLLAHHDALRMRYSRTEQGWTQRIEGLPETIPFRSVDLSAFPTTAEQEMRLEEIASEVQASLDLTEGPVVQAVYFQLGAEQPGRLLIVAHHLVVDGVSWRILLEDLQTAYEQLAKGQAVQLAAKTTSFKTWAEQLRLYATSEALRQEKAFWLEQMDEVKPLPIDRIFEPSENTEATVKQVMLSLNAEETRALLQDTLSPYRLQINDVLLAALTKALHRWTGEQTVAIHLEGHGREELIEGADLSRTVGWFTSLYPVQLSVDPTKPWGDTLKAVKEQLRSIPNKGVGYGILRYLSEDAELQKRLAEKAQAEISFNYLGQFDQAVVPESKFGMAQEARGANVGQQAIRQHLLDVNSVIAGEQLHVTWMYSENIHEEATIQQLAHNYLEALREIIAHGQSEAAGGYTPSDFPLARMDQRALDKYLGQNRSIENVYPLSPLQGGMLFHSLYEQEGGDYVVQLAMTVEGLDVEAFEQAWQKVVDRHSILRTSFIWEGLTEPHQVVRKQVKACVEKIDLRHLTPDQQKAELSEYLAADRRRSFEIAVAPLMRWTLFRLSESAYRFTWSFHHVLLDGWSIPIVLKDWFSAYLSLAEGKEVAHSFVQPFAHYVEWVQRQDLQAAEQFWREQLAGFYEPTPLAMGNSTGGRADLPKGYEEQEIRLAKDATARLQAFVRTHQLTLNTLVQGAWALMLGRYGGTDDVVFGATGSGRPADLPGVESMVGLFINTLPIRVALDANQSVREWLRGMQEQQVELRQYEYTPLVDIQGWSEMTRNTALFESIFIFENYPIGESVKDEQHQLRLSDVETIEQTNYPLTVVCGPGEELIVKIKYEQNRFAPEQIERVLQQMSQLLQDMTAKPEQRLQDVSMISERERQQVLVDWNETSVAYPQQLCVHQAFEQQVEKTPDAVALVYKDVELTYAELNERANQLAHRLLAEGVKPDELVGICVERSPEMIVAFLGVMKAGAAYVPLDPAHPQERIAYMIEDSQASVLLTQASLTDRLPASSRQVICLDSDELANEPVTNAETSVGEHNLAYVIYTSGSTGLPKGVMIEHRSVINLAYDLIRHFQIDATSRVLQFISFSFDVSVSEIVMSLLAGATLVIEDRESLLPGPELIRVLQEQRITTFAMVSSVLAALPEADLPDLRTIIVGGEAPSRELVARYATGRQFINCYGPTETTVTATLKHCQDDGKNPPIGRPIANTTVYVLDAHLQPVPIGVPGELYIGGKGVARGYWNRPELTAERFIADPFGQADERLYRTGDLVRYLENGELEFLGRIDDQVKIRGYRIELGEIENALRQHPAVQNVVVIARQEGAGDKRLAAYLVAATGQQPDEAELVRYLKSTLPEYMVPAGYVWLEKIPLTVNGKVDRRALPAPDYGHAETGKAYVAPRKPIEEIVANIWAQVLSVERVGVYDDFFELGGHSLLATQAVSRLKEAFGVNVPLRTLFEHPDVAGMSEKLAGLLEEQSGVTSIPLVPVPRDKQLPLSFAQQRLWFLDRLMPDSALYNIPSAVRIQGQLNIRAWERSLQTIIERHESLRTTFTDIGGEAVQVIHEMMEWRLVEIDLRDLPDEEREAAVQRLEKAEASQPFNLRTGPLLRATLIQTGEEDFVFLLNMHHIVSDGWSMSIFMGELATIYEALSKGDTPQLAEMPLQYADFAAWQRDWLQGEVLEQQLAYWREKLGAAEPMLALPTDRPRPAVQTHHGALYTTAFPLALTEKLHALSRQEGATLFMTLLAAFQTLLYRYSGQDDIIVGSPVAGRNKQETESMIGFFINTLAMRTDMSGAPTFRELLARVRDTALEAYTHQDLPFEKLIDELELERSLSYSPLFQVMFALQNFQMLTREFEGIEIVPFESKNEAVMSKYDISLTMAETQNGLVATFDYNTDLFDHSTIVRMVNHFHQLLEGIVARPDSSIQALPLLATDEREQLVSAWNNTAAAYTYEQTVHELVAAMAEKMPEQLAVVSAEGSLTYAQLDAKANQLANYLQQQGITPETLVGICVERSSEMIVGQLGILKAGGAFVPMDPAYPQERLAFMMADTGMPFVLTQERLLETLPAGDAAFICLDADWEVIAEESTQAPELAVTTDQLAYVIYTSGSTGTPKGVEIEHRALLNLIYWHQHAYTITPDDRASQIAGTAFDAAVWEIWPYMTAGATLYLPQEEIRLIPEKLRDWLVAEGITISFLPTPLAESMLSVDWPSHAALRYVLTGGDKLHHYPAEHVPFTLVNQYGPTENAVVATAGIVAVQAGQVTPPSIGRPIDNVQVYILDEQRQPVPIGVTGELYIAGSSLARGYYKRPDLTQERFVDNPFTANRGAKMYRTGDLVRYLPDGQIEFIGRSDDQVSIRGFRVELGEIESVLYQHPAVKEAIVLAREDMPGVKRLAAYVVVAEDDAEQADDLRGYLKEKLPEYMVPAAFVTLKALPLTPNGKVDRRALPVPEYTAADGEYVAPETFVEKVLAQIWKEVLGVEEVGIHDNFFELGGDSILSIQIVARAGQSGIRLSPKLLFENQTIAELSHAVGDSVHICAEQGLVTGEVPLLPIQHWFFEQKLADRNHWNQSVLLTVQPIDPEILKQAFYHLLGHHDALRLRFYHQNGAWKQAGAEWTDIIPFYVVELGDLPANQQVEQIEKLSGEAQASLHLADGPLLRAVYFDMGAGQEGRLLIVIHHLAVDGVSWRIITEDLNKACNQLLQGKQVQLPPKTSSYKYWAEKLVEYAASDSLTEEADYWLSRLDTEVAALPKDYEHGQNRELAARTVSVALTQEETKVLLQELPAVYQTQINDVLLTALAEAVFVWTGNQTTLVHLEGHGREDIFDDVDLSRTVGWFTSMYTILLDTRGTSSLTEALQTTKEQLRSIPHKGIGYGILRYLNKETAEKFKSLPKAQISFNYLGQLDQAVRDTDSLFGFASEARGDNFNRNSDRQHLLDFGCSVVGGQLVVSVAFSKEIYRKETIEALADYYITALRQLLAHAKTDKAAAPAQSAASNLSEFGWDDEEIADLLDLIQDK</sequence>
<organism>
    <name type="scientific">Brevibacillus parabrevis</name>
    <dbReference type="NCBI Taxonomy" id="54914"/>
    <lineage>
        <taxon>Bacteria</taxon>
        <taxon>Bacillati</taxon>
        <taxon>Bacillota</taxon>
        <taxon>Bacilli</taxon>
        <taxon>Bacillales</taxon>
        <taxon>Paenibacillaceae</taxon>
        <taxon>Brevibacillus</taxon>
    </lineage>
</organism>
<reference key="1">
    <citation type="journal article" date="2004" name="J. Biol. Chem.">
        <title>The linear pentadecapeptide gramicidin is assembled by four multimodular nonribosomal peptide synthetases that comprise 16 modules with 57 catalytic domains.</title>
        <authorList>
            <person name="Kessler N."/>
            <person name="Schuhmann H."/>
            <person name="Morneweg S."/>
            <person name="Linne U."/>
            <person name="Marahiel M.A."/>
        </authorList>
    </citation>
    <scope>NUCLEOTIDE SEQUENCE [GENOMIC DNA]</scope>
    <source>
        <strain>ATCC 8185 / DSM 362 / JCM 20017 / IAM 1031 / NBRC 3331 / NCDO 717 / NCIMB 8598 / NRS 751 / BG</strain>
    </source>
</reference>
<name>LGRC_BREPA</name>
<gene>
    <name type="primary">lgrC</name>
</gene>
<protein>
    <recommendedName>
        <fullName>Linear gramicidin synthase subunit C</fullName>
    </recommendedName>
    <domain>
        <recommendedName>
            <fullName>ATP-dependent valine adenylase</fullName>
            <shortName>ValA</shortName>
        </recommendedName>
        <alternativeName>
            <fullName>Valine activase</fullName>
        </alternativeName>
    </domain>
    <domain>
        <recommendedName>
            <fullName>ATP-dependent D-valine adenylase</fullName>
            <shortName>D-ValA</shortName>
        </recommendedName>
        <alternativeName>
            <fullName>D-valine activase</fullName>
        </alternativeName>
    </domain>
    <domain>
        <recommendedName>
            <fullName>Valine racemase [ATP-hydrolyzing]</fullName>
            <ecNumber>5.1.1.-</ecNumber>
        </recommendedName>
    </domain>
    <domain>
        <recommendedName>
            <fullName>ATP-dependent tryptophan adenylase</fullName>
            <shortName>TrpA</shortName>
        </recommendedName>
        <alternativeName>
            <fullName>Tryptophan activase</fullName>
        </alternativeName>
    </domain>
    <domain>
        <recommendedName>
            <fullName>ATP-dependent tryptophan/phenylalanine/tyrosine adenylase</fullName>
            <shortName>Trp/Phe/TyrA</shortName>
        </recommendedName>
        <alternativeName>
            <fullName>Tryptophan/phenylalanine/tyrosine activase</fullName>
        </alternativeName>
    </domain>
</protein>
<keyword id="KW-0045">Antibiotic biosynthesis</keyword>
<keyword id="KW-0413">Isomerase</keyword>
<keyword id="KW-0436">Ligase</keyword>
<keyword id="KW-0511">Multifunctional enzyme</keyword>
<keyword id="KW-0596">Phosphopantetheine</keyword>
<keyword id="KW-0597">Phosphoprotein</keyword>
<keyword id="KW-0677">Repeat</keyword>